<protein>
    <recommendedName>
        <fullName evidence="17">Anaerobic nitrite reductase NSHB1</fullName>
        <ecNumber evidence="9">1.7.2.-</ecNumber>
    </recommendedName>
    <alternativeName>
        <fullName evidence="15">Non-symbiotic hemoglobin 1</fullName>
        <shortName evidence="16">OsNSHB1</shortName>
        <shortName evidence="14">nsHb1-1</shortName>
        <shortName evidence="15">rHb1</shortName>
    </alternativeName>
    <alternativeName>
        <fullName evidence="13">ORYsa GLB1a</fullName>
    </alternativeName>
    <alternativeName>
        <fullName evidence="16">Phytoglobin 1.1</fullName>
        <shortName evidence="16">OsPgb1.1</shortName>
        <shortName evidence="16">Phytogb1.1</shortName>
    </alternativeName>
</protein>
<proteinExistence type="evidence at protein level"/>
<evidence type="ECO:0000250" key="1">
    <source>
        <dbReference type="UniProtKB" id="A2XE98"/>
    </source>
</evidence>
<evidence type="ECO:0000250" key="2">
    <source>
        <dbReference type="UniProtKB" id="P68168"/>
    </source>
</evidence>
<evidence type="ECO:0000255" key="3">
    <source>
        <dbReference type="PROSITE-ProRule" id="PRU00238"/>
    </source>
</evidence>
<evidence type="ECO:0000269" key="4">
    <source>
    </source>
</evidence>
<evidence type="ECO:0000269" key="5">
    <source>
    </source>
</evidence>
<evidence type="ECO:0000269" key="6">
    <source>
    </source>
</evidence>
<evidence type="ECO:0000269" key="7">
    <source>
    </source>
</evidence>
<evidence type="ECO:0000269" key="8">
    <source>
    </source>
</evidence>
<evidence type="ECO:0000269" key="9">
    <source>
    </source>
</evidence>
<evidence type="ECO:0000269" key="10">
    <source>
    </source>
</evidence>
<evidence type="ECO:0000269" key="11">
    <source>
    </source>
</evidence>
<evidence type="ECO:0000269" key="12">
    <source>
    </source>
</evidence>
<evidence type="ECO:0000303" key="13">
    <source>
    </source>
</evidence>
<evidence type="ECO:0000303" key="14">
    <source>
    </source>
</evidence>
<evidence type="ECO:0000303" key="15">
    <source>
    </source>
</evidence>
<evidence type="ECO:0000305" key="16"/>
<evidence type="ECO:0000305" key="17">
    <source>
    </source>
</evidence>
<evidence type="ECO:0000312" key="18">
    <source>
        <dbReference type="EMBL" id="AAM19125.1"/>
    </source>
</evidence>
<evidence type="ECO:0000312" key="19">
    <source>
        <dbReference type="EMBL" id="EAZ26180.1"/>
    </source>
</evidence>
<evidence type="ECO:0007744" key="20">
    <source>
        <dbReference type="PDB" id="1D8U"/>
    </source>
</evidence>
<evidence type="ECO:0007744" key="21">
    <source>
        <dbReference type="PDB" id="2GNV"/>
    </source>
</evidence>
<evidence type="ECO:0007744" key="22">
    <source>
        <dbReference type="PDB" id="2GNW"/>
    </source>
</evidence>
<evidence type="ECO:0007829" key="23">
    <source>
        <dbReference type="PDB" id="1D8U"/>
    </source>
</evidence>
<evidence type="ECO:0007829" key="24">
    <source>
        <dbReference type="PDB" id="2GNV"/>
    </source>
</evidence>
<sequence length="166" mass="18444">MALVEDNNAVAVSFSEEQEALVLKSWAILKKDSANIALRFFLKIFEVAPSASQMFSFLRNSDVPLEKNPKLKTHAMSVFVMTCEAAAQLRKAGKVTVRDTTLKRLGATHLKYGVGDAHFEVVKFALLDTIKEEVPADMWSPAMKSAWSEAYDHLVAAIKQEMKPAE</sequence>
<feature type="chain" id="PRO_0000193021" description="Anaerobic nitrite reductase NSHB1">
    <location>
        <begin position="1"/>
        <end position="166"/>
    </location>
</feature>
<feature type="domain" description="Globin" evidence="3">
    <location>
        <begin position="13"/>
        <end position="163"/>
    </location>
</feature>
<feature type="short sequence motif" description="Homodimerization" evidence="4 8 20 21 22">
    <location>
        <begin position="46"/>
        <end position="50"/>
    </location>
</feature>
<feature type="short sequence motif" description="Homodimerization" evidence="4 8 20 21 22">
    <location>
        <begin position="116"/>
        <end position="128"/>
    </location>
</feature>
<feature type="binding site" evidence="2">
    <location>
        <position position="56"/>
    </location>
    <ligand>
        <name>heme b</name>
        <dbReference type="ChEBI" id="CHEBI:60344"/>
    </ligand>
</feature>
<feature type="binding site" evidence="4 8 20 21">
    <location>
        <position position="70"/>
    </location>
    <ligand>
        <name>heme b</name>
        <dbReference type="ChEBI" id="CHEBI:60344"/>
    </ligand>
</feature>
<feature type="binding site" description="distal binding residue" evidence="3 4 8 20 21 22">
    <location>
        <position position="74"/>
    </location>
    <ligand>
        <name>heme b</name>
        <dbReference type="ChEBI" id="CHEBI:60344"/>
    </ligand>
    <ligandPart>
        <name>Fe</name>
        <dbReference type="ChEBI" id="CHEBI:18248"/>
    </ligandPart>
</feature>
<feature type="binding site" evidence="4 8 20 21 22">
    <location>
        <position position="104"/>
    </location>
    <ligand>
        <name>heme b</name>
        <dbReference type="ChEBI" id="CHEBI:60344"/>
    </ligand>
</feature>
<feature type="binding site" evidence="4 8 20 21 22">
    <location>
        <position position="108"/>
    </location>
    <ligand>
        <name>heme b</name>
        <dbReference type="ChEBI" id="CHEBI:60344"/>
    </ligand>
</feature>
<feature type="binding site" description="proximal binding residue" evidence="3 4 8 20 21 22">
    <location>
        <position position="109"/>
    </location>
    <ligand>
        <name>heme b</name>
        <dbReference type="ChEBI" id="CHEBI:60344"/>
    </ligand>
    <ligandPart>
        <name>Fe</name>
        <dbReference type="ChEBI" id="CHEBI:18248"/>
    </ligandPart>
</feature>
<feature type="site" description="Homodimerization" evidence="4 20">
    <location>
        <position position="144"/>
    </location>
</feature>
<feature type="mutagenesis site" description="Prevents subunit association, but has little effect on ligand binding." evidence="5">
    <original>V</original>
    <variation>N</variation>
    <location>
        <position position="47"/>
    </location>
</feature>
<feature type="mutagenesis site" description="Prevents subunit association, but has little effect on ligand binding." evidence="5">
    <original>S</original>
    <variation>A</variation>
    <location>
        <position position="50"/>
    </location>
</feature>
<feature type="mutagenesis site" description="Increases 1000 times the dissociation constant of O(2)." evidence="12">
    <original>H</original>
    <variation>L</variation>
    <location>
        <position position="74"/>
    </location>
</feature>
<feature type="mutagenesis site" description="Prevents subunit association, but has little effect on ligand binding." evidence="5">
    <original>E</original>
    <variation>V</variation>
    <location>
        <position position="120"/>
    </location>
</feature>
<feature type="mutagenesis site" description="Prevents subunit association, but has little effect on ligand binding." evidence="5">
    <original>V</original>
    <variation>N</variation>
    <location>
        <position position="121"/>
    </location>
</feature>
<feature type="strand" evidence="23">
    <location>
        <begin position="7"/>
        <end position="9"/>
    </location>
</feature>
<feature type="helix" evidence="24">
    <location>
        <begin position="16"/>
        <end position="29"/>
    </location>
</feature>
<feature type="helix" evidence="24">
    <location>
        <begin position="30"/>
        <end position="32"/>
    </location>
</feature>
<feature type="helix" evidence="24">
    <location>
        <begin position="33"/>
        <end position="47"/>
    </location>
</feature>
<feature type="helix" evidence="24">
    <location>
        <begin position="49"/>
        <end position="53"/>
    </location>
</feature>
<feature type="turn" evidence="24">
    <location>
        <begin position="58"/>
        <end position="60"/>
    </location>
</feature>
<feature type="helix" evidence="24">
    <location>
        <begin position="65"/>
        <end position="67"/>
    </location>
</feature>
<feature type="helix" evidence="24">
    <location>
        <begin position="69"/>
        <end position="92"/>
    </location>
</feature>
<feature type="helix" evidence="24">
    <location>
        <begin position="99"/>
        <end position="111"/>
    </location>
</feature>
<feature type="helix" evidence="24">
    <location>
        <begin position="116"/>
        <end position="133"/>
    </location>
</feature>
<feature type="turn" evidence="24">
    <location>
        <begin position="136"/>
        <end position="138"/>
    </location>
</feature>
<feature type="helix" evidence="24">
    <location>
        <begin position="141"/>
        <end position="160"/>
    </location>
</feature>
<accession>O04986</accession>
<accession>Q10PH5</accession>
<accession>Q7G715</accession>
<reference key="1">
    <citation type="journal article" date="1997" name="Plant Physiol.">
        <title>Rice hemoglobins. Gene cloning, analysis, and O2-binding kinetics of a recombinant protein synthesized in Escherichia coli.</title>
        <authorList>
            <person name="Arredondo-Peter R."/>
            <person name="Hargrove M.S."/>
            <person name="Sarath G."/>
            <person name="Moran J.F."/>
            <person name="Lohrman J."/>
            <person name="Olson J.S."/>
            <person name="Klucas R.V."/>
        </authorList>
    </citation>
    <scope>NUCLEOTIDE SEQUENCE [GENOMIC DNA / MRNA]</scope>
    <scope>CHARACTERIZATION</scope>
    <scope>FUNCTION</scope>
    <scope>MUTAGENESIS OF HIS-74</scope>
    <scope>TISSUE SPECIFICITY</scope>
    <source>
        <strain>cv. Jackson</strain>
    </source>
</reference>
<reference key="2">
    <citation type="journal article" date="2002" name="Plant Physiol. Biochem.">
        <title>Mapping and analysis of a hemoglobin gene family from rice (Oryza sativa).</title>
        <authorList>
            <person name="Lira-Ruan V."/>
            <person name="Ross E.J.H."/>
            <person name="Sarath G."/>
            <person name="Klucas R.V."/>
            <person name="Arredondo-Peter R."/>
        </authorList>
    </citation>
    <scope>NUCLEOTIDE SEQUENCE [GENOMIC DNA]</scope>
    <source>
        <strain>cv. Nipponbare</strain>
    </source>
</reference>
<reference key="3">
    <citation type="journal article" date="2005" name="Genome Res.">
        <title>Sequence, annotation, and analysis of synteny between rice chromosome 3 and diverged grass species.</title>
        <authorList>
            <consortium name="The rice chromosome 3 sequencing consortium"/>
            <person name="Buell C.R."/>
            <person name="Yuan Q."/>
            <person name="Ouyang S."/>
            <person name="Liu J."/>
            <person name="Zhu W."/>
            <person name="Wang A."/>
            <person name="Maiti R."/>
            <person name="Haas B."/>
            <person name="Wortman J."/>
            <person name="Pertea M."/>
            <person name="Jones K.M."/>
            <person name="Kim M."/>
            <person name="Overton L."/>
            <person name="Tsitrin T."/>
            <person name="Fadrosh D."/>
            <person name="Bera J."/>
            <person name="Weaver B."/>
            <person name="Jin S."/>
            <person name="Johri S."/>
            <person name="Reardon M."/>
            <person name="Webb K."/>
            <person name="Hill J."/>
            <person name="Moffat K."/>
            <person name="Tallon L."/>
            <person name="Van Aken S."/>
            <person name="Lewis M."/>
            <person name="Utterback T."/>
            <person name="Feldblyum T."/>
            <person name="Zismann V."/>
            <person name="Iobst S."/>
            <person name="Hsiao J."/>
            <person name="de Vazeille A.R."/>
            <person name="Salzberg S.L."/>
            <person name="White O."/>
            <person name="Fraser C.M."/>
            <person name="Yu Y."/>
            <person name="Kim H."/>
            <person name="Rambo T."/>
            <person name="Currie J."/>
            <person name="Collura K."/>
            <person name="Kernodle-Thompson S."/>
            <person name="Wei F."/>
            <person name="Kudrna K."/>
            <person name="Ammiraju J.S.S."/>
            <person name="Luo M."/>
            <person name="Goicoechea J.L."/>
            <person name="Wing R.A."/>
            <person name="Henry D."/>
            <person name="Oates R."/>
            <person name="Palmer M."/>
            <person name="Pries G."/>
            <person name="Saski C."/>
            <person name="Simmons J."/>
            <person name="Soderlund C."/>
            <person name="Nelson W."/>
            <person name="de la Bastide M."/>
            <person name="Spiegel L."/>
            <person name="Nascimento L."/>
            <person name="Huang E."/>
            <person name="Preston R."/>
            <person name="Zutavern T."/>
            <person name="Palmer L."/>
            <person name="O'Shaughnessy A."/>
            <person name="Dike S."/>
            <person name="McCombie W.R."/>
            <person name="Minx P."/>
            <person name="Cordum H."/>
            <person name="Wilson R."/>
            <person name="Jin W."/>
            <person name="Lee H.R."/>
            <person name="Jiang J."/>
            <person name="Jackson S."/>
        </authorList>
    </citation>
    <scope>NUCLEOTIDE SEQUENCE [LARGE SCALE GENOMIC DNA]</scope>
    <source>
        <strain>cv. Nipponbare</strain>
    </source>
</reference>
<reference key="4">
    <citation type="journal article" date="2005" name="Nature">
        <title>The map-based sequence of the rice genome.</title>
        <authorList>
            <consortium name="International rice genome sequencing project (IRGSP)"/>
        </authorList>
    </citation>
    <scope>NUCLEOTIDE SEQUENCE [LARGE SCALE GENOMIC DNA]</scope>
    <source>
        <strain>cv. Nipponbare</strain>
    </source>
</reference>
<reference key="5">
    <citation type="journal article" date="2008" name="Nucleic Acids Res.">
        <title>The rice annotation project database (RAP-DB): 2008 update.</title>
        <authorList>
            <consortium name="The rice annotation project (RAP)"/>
        </authorList>
    </citation>
    <scope>GENOME REANNOTATION</scope>
    <source>
        <strain>cv. Nipponbare</strain>
    </source>
</reference>
<reference key="6">
    <citation type="journal article" date="2013" name="Rice">
        <title>Improvement of the Oryza sativa Nipponbare reference genome using next generation sequence and optical map data.</title>
        <authorList>
            <person name="Kawahara Y."/>
            <person name="de la Bastide M."/>
            <person name="Hamilton J.P."/>
            <person name="Kanamori H."/>
            <person name="McCombie W.R."/>
            <person name="Ouyang S."/>
            <person name="Schwartz D.C."/>
            <person name="Tanaka T."/>
            <person name="Wu J."/>
            <person name="Zhou S."/>
            <person name="Childs K.L."/>
            <person name="Davidson R.M."/>
            <person name="Lin H."/>
            <person name="Quesada-Ocampo L."/>
            <person name="Vaillancourt B."/>
            <person name="Sakai H."/>
            <person name="Lee S.S."/>
            <person name="Kim J."/>
            <person name="Numa H."/>
            <person name="Itoh T."/>
            <person name="Buell C.R."/>
            <person name="Matsumoto T."/>
        </authorList>
    </citation>
    <scope>GENOME REANNOTATION</scope>
    <source>
        <strain>cv. Nipponbare</strain>
    </source>
</reference>
<reference key="7">
    <citation type="journal article" date="2005" name="PLoS Biol.">
        <title>The genomes of Oryza sativa: a history of duplications.</title>
        <authorList>
            <person name="Yu J."/>
            <person name="Wang J."/>
            <person name="Lin W."/>
            <person name="Li S."/>
            <person name="Li H."/>
            <person name="Zhou J."/>
            <person name="Ni P."/>
            <person name="Dong W."/>
            <person name="Hu S."/>
            <person name="Zeng C."/>
            <person name="Zhang J."/>
            <person name="Zhang Y."/>
            <person name="Li R."/>
            <person name="Xu Z."/>
            <person name="Li S."/>
            <person name="Li X."/>
            <person name="Zheng H."/>
            <person name="Cong L."/>
            <person name="Lin L."/>
            <person name="Yin J."/>
            <person name="Geng J."/>
            <person name="Li G."/>
            <person name="Shi J."/>
            <person name="Liu J."/>
            <person name="Lv H."/>
            <person name="Li J."/>
            <person name="Wang J."/>
            <person name="Deng Y."/>
            <person name="Ran L."/>
            <person name="Shi X."/>
            <person name="Wang X."/>
            <person name="Wu Q."/>
            <person name="Li C."/>
            <person name="Ren X."/>
            <person name="Wang J."/>
            <person name="Wang X."/>
            <person name="Li D."/>
            <person name="Liu D."/>
            <person name="Zhang X."/>
            <person name="Ji Z."/>
            <person name="Zhao W."/>
            <person name="Sun Y."/>
            <person name="Zhang Z."/>
            <person name="Bao J."/>
            <person name="Han Y."/>
            <person name="Dong L."/>
            <person name="Ji J."/>
            <person name="Chen P."/>
            <person name="Wu S."/>
            <person name="Liu J."/>
            <person name="Xiao Y."/>
            <person name="Bu D."/>
            <person name="Tan J."/>
            <person name="Yang L."/>
            <person name="Ye C."/>
            <person name="Zhang J."/>
            <person name="Xu J."/>
            <person name="Zhou Y."/>
            <person name="Yu Y."/>
            <person name="Zhang B."/>
            <person name="Zhuang S."/>
            <person name="Wei H."/>
            <person name="Liu B."/>
            <person name="Lei M."/>
            <person name="Yu H."/>
            <person name="Li Y."/>
            <person name="Xu H."/>
            <person name="Wei S."/>
            <person name="He X."/>
            <person name="Fang L."/>
            <person name="Zhang Z."/>
            <person name="Zhang Y."/>
            <person name="Huang X."/>
            <person name="Su Z."/>
            <person name="Tong W."/>
            <person name="Li J."/>
            <person name="Tong Z."/>
            <person name="Li S."/>
            <person name="Ye J."/>
            <person name="Wang L."/>
            <person name="Fang L."/>
            <person name="Lei T."/>
            <person name="Chen C.-S."/>
            <person name="Chen H.-C."/>
            <person name="Xu Z."/>
            <person name="Li H."/>
            <person name="Huang H."/>
            <person name="Zhang F."/>
            <person name="Xu H."/>
            <person name="Li N."/>
            <person name="Zhao C."/>
            <person name="Li S."/>
            <person name="Dong L."/>
            <person name="Huang Y."/>
            <person name="Li L."/>
            <person name="Xi Y."/>
            <person name="Qi Q."/>
            <person name="Li W."/>
            <person name="Zhang B."/>
            <person name="Hu W."/>
            <person name="Zhang Y."/>
            <person name="Tian X."/>
            <person name="Jiao Y."/>
            <person name="Liang X."/>
            <person name="Jin J."/>
            <person name="Gao L."/>
            <person name="Zheng W."/>
            <person name="Hao B."/>
            <person name="Liu S.-M."/>
            <person name="Wang W."/>
            <person name="Yuan L."/>
            <person name="Cao M."/>
            <person name="McDermott J."/>
            <person name="Samudrala R."/>
            <person name="Wang J."/>
            <person name="Wong G.K.-S."/>
            <person name="Yang H."/>
        </authorList>
    </citation>
    <scope>NUCLEOTIDE SEQUENCE [LARGE SCALE GENOMIC DNA]</scope>
    <source>
        <strain>cv. Nipponbare</strain>
    </source>
</reference>
<reference key="8">
    <citation type="journal article" date="2003" name="Science">
        <title>Collection, mapping, and annotation of over 28,000 cDNA clones from japonica rice.</title>
        <authorList>
            <consortium name="The rice full-length cDNA consortium"/>
        </authorList>
    </citation>
    <scope>NUCLEOTIDE SEQUENCE [LARGE SCALE MRNA]</scope>
    <source>
        <strain>cv. Nipponbare</strain>
    </source>
</reference>
<reference key="9">
    <citation type="journal article" date="2001" name="J. Biol. Chem.">
        <title>Quaternary structure of rice nonsymbiotic hemoglobin.</title>
        <authorList>
            <person name="Goodman M.D."/>
            <person name="Hargrove M.S."/>
        </authorList>
    </citation>
    <scope>CHARACTERIZATION</scope>
    <scope>MUTAGENESIS OF VAL-47; SER-50; GLU-120 AND VAL-121</scope>
    <scope>HOMODIMER</scope>
</reference>
<reference key="10">
    <citation type="journal article" date="2001" name="Plant Sci.">
        <title>Synthesis of hemoglobins in rice (Oryza sativa var. Jackson) plants growing in normal and stress conditions.</title>
        <authorList>
            <person name="Lira-Ruan V."/>
            <person name="Sarath G."/>
            <person name="Klucas R.V."/>
            <person name="Arredondo-Peter R."/>
        </authorList>
    </citation>
    <scope>INDUCTION</scope>
    <scope>TISSUE SPECIFICITY</scope>
    <source>
        <strain>cv. Jackson</strain>
    </source>
</reference>
<reference key="11">
    <citation type="journal article" date="2005" name="Plant Cell Physiol.">
        <title>Induction of class-1 non-symbiotic hemoglobin genes by nitrate, nitrite and nitric oxide in cultured rice cells.</title>
        <authorList>
            <person name="Ohwaki Y."/>
            <person name="Kawagishi-Kobayashi M."/>
            <person name="Wakasa K."/>
            <person name="Fujihara S."/>
            <person name="Yoneyama T."/>
        </authorList>
    </citation>
    <scope>INDUCTION BY NITRATE; NITRITE AND NITRIC OXIDE DONORS</scope>
    <source>
        <strain>cv. Nipponbare</strain>
    </source>
</reference>
<reference key="12">
    <citation type="journal article" date="2007" name="Gene">
        <title>Plant hemoglobins: what we know six decades after their discovery.</title>
        <authorList>
            <person name="Garrocho-Villegas V."/>
            <person name="Gopalasubramaniam S.K."/>
            <person name="Arredondo-Peter R."/>
        </authorList>
    </citation>
    <scope>REVIEW</scope>
</reference>
<reference key="13">
    <citation type="journal article" date="2008" name="Plant Physiol. Biochem.">
        <title>Expression and in silico structural analysis of a rice (Oryza sativa) hemoglobin 5.</title>
        <authorList>
            <person name="Garrocho-Villegas V."/>
            <person name="Bustos-Rivera G."/>
            <person name="Gough J."/>
            <person name="Vinogradov S.N."/>
            <person name="Arredondo-Peter R."/>
        </authorList>
    </citation>
    <scope>GENE FAMILY</scope>
    <source>
        <strain>cv. Morelos</strain>
    </source>
</reference>
<reference key="14">
    <citation type="journal article" date="2011" name="Biochemistry">
        <title>Plant and cyanobacterial hemoglobins reduce nitrite to nitric oxide under anoxic conditions.</title>
        <authorList>
            <person name="Sturms R."/>
            <person name="DiSpirito A.A."/>
            <person name="Hargrove M.S."/>
        </authorList>
    </citation>
    <scope>FUNCTION</scope>
    <scope>CATALYTIC ACTIVITY</scope>
</reference>
<reference key="15">
    <citation type="journal article" date="2011" name="Commun. Integr. Biol.">
        <title>Expression of non-symbiotic hemoglobin 1 and 2 genes in rice (Oryza sativa) embryonic organs.</title>
        <authorList>
            <person name="Lira-Ruan V."/>
            <person name="Ruiz-Kubli M."/>
            <person name="Arredondo-Peter R."/>
        </authorList>
    </citation>
    <scope>TISSUE SPECIFICITY</scope>
</reference>
<reference key="16">
    <citation type="journal article" date="2013" name="PLoS ONE">
        <title>Nitric oxide in plants: the roles of ascorbate and hemoglobin.</title>
        <authorList>
            <person name="Wang X."/>
            <person name="Hargrove M.S."/>
        </authorList>
    </citation>
    <scope>ACTIVITY REGULATION</scope>
</reference>
<reference key="17">
    <citation type="journal article" date="2000" name="Structure">
        <title>Crystal structure of a nonsymbiotic plant hemoglobin.</title>
        <authorList>
            <person name="Hargrove M.S."/>
            <person name="Brucker E.A."/>
            <person name="Stec B."/>
            <person name="Sarath G."/>
            <person name="Arredondo-Peter R."/>
            <person name="Klucas R.V."/>
            <person name="Olson J.S."/>
            <person name="Phillips G.N. Jr."/>
        </authorList>
    </citation>
    <scope>X-RAY CRYSTALLOGRAPHY (2.35 ANGSTROMS) IN COMPLEX WITH HEME B</scope>
    <scope>HOMODIMER</scope>
    <scope>COFACTOR</scope>
</reference>
<reference key="18">
    <citation type="journal article" date="2006" name="Biochemistry">
        <title>Role of phenylalanine B10 in plant nonsymbiotic hemoglobins.</title>
        <authorList>
            <person name="Smagghe B.J."/>
            <person name="Kundu S."/>
            <person name="Hoy J.A."/>
            <person name="Halder P."/>
            <person name="Weiland T.R."/>
            <person name="Savage A."/>
            <person name="Venugopal A."/>
            <person name="Goodman M."/>
            <person name="Premer S."/>
            <person name="Hargrove M.S."/>
        </authorList>
    </citation>
    <scope>X-RAY CRYSTALLOGRAPHY (2.30 ANGSTROMS) OF 2-166 IN COMPLEX WITH HEME B</scope>
    <scope>HOMODIMER</scope>
    <scope>COFACTOR</scope>
</reference>
<name>NSHB1_ORYSJ</name>
<gene>
    <name evidence="16" type="primary">NSHB1</name>
    <name evidence="13" type="synonym">GLB1A</name>
    <name evidence="15" type="synonym">HB1</name>
    <name evidence="14" type="synonym">Hb1-1</name>
    <name evidence="16" type="synonym">Pgb1.1</name>
    <name evidence="16" type="ordered locus">Os03g0233900</name>
    <name evidence="16" type="ordered locus">LOC_Os03g13140</name>
    <name evidence="18" type="ORF">OJ1175C11.5</name>
    <name evidence="19" type="ORF">OsJ_10047</name>
</gene>
<dbReference type="EC" id="1.7.2.-" evidence="9"/>
<dbReference type="EMBL" id="U76030">
    <property type="protein sequence ID" value="AAC49883.1"/>
    <property type="molecule type" value="mRNA"/>
</dbReference>
<dbReference type="EMBL" id="U76029">
    <property type="protein sequence ID" value="AAC49882.1"/>
    <property type="molecule type" value="Genomic_DNA"/>
</dbReference>
<dbReference type="EMBL" id="AF335504">
    <property type="protein sequence ID" value="AAK72229.1"/>
    <property type="molecule type" value="Genomic_DNA"/>
</dbReference>
<dbReference type="EMBL" id="AC103891">
    <property type="protein sequence ID" value="AAM19125.1"/>
    <property type="molecule type" value="Genomic_DNA"/>
</dbReference>
<dbReference type="EMBL" id="DP000009">
    <property type="protein sequence ID" value="ABF94821.1"/>
    <property type="molecule type" value="Genomic_DNA"/>
</dbReference>
<dbReference type="EMBL" id="AP008209">
    <property type="protein sequence ID" value="BAF11390.1"/>
    <property type="molecule type" value="Genomic_DNA"/>
</dbReference>
<dbReference type="EMBL" id="AP014959">
    <property type="protein sequence ID" value="BAS83133.1"/>
    <property type="molecule type" value="Genomic_DNA"/>
</dbReference>
<dbReference type="EMBL" id="CM000140">
    <property type="protein sequence ID" value="EAZ26180.1"/>
    <property type="molecule type" value="Genomic_DNA"/>
</dbReference>
<dbReference type="EMBL" id="AK064054">
    <property type="protein sequence ID" value="BAG88986.1"/>
    <property type="molecule type" value="mRNA"/>
</dbReference>
<dbReference type="PIR" id="T04163">
    <property type="entry name" value="T04163"/>
</dbReference>
<dbReference type="RefSeq" id="NP_001389049.1">
    <property type="nucleotide sequence ID" value="NM_001402120.1"/>
</dbReference>
<dbReference type="RefSeq" id="XP_015629794.1">
    <property type="nucleotide sequence ID" value="XM_015774308.1"/>
</dbReference>
<dbReference type="PDB" id="1D8U">
    <property type="method" value="X-ray"/>
    <property type="resolution" value="2.35 A"/>
    <property type="chains" value="A/B=1-166"/>
</dbReference>
<dbReference type="PDB" id="2GNV">
    <property type="method" value="X-ray"/>
    <property type="resolution" value="2.30 A"/>
    <property type="chains" value="A/B=2-166"/>
</dbReference>
<dbReference type="PDB" id="2GNW">
    <property type="method" value="X-ray"/>
    <property type="resolution" value="2.40 A"/>
    <property type="chains" value="A/B=2-166"/>
</dbReference>
<dbReference type="PDBsum" id="1D8U"/>
<dbReference type="PDBsum" id="2GNV"/>
<dbReference type="PDBsum" id="2GNW"/>
<dbReference type="SMR" id="O04986"/>
<dbReference type="FunCoup" id="O04986">
    <property type="interactions" value="1096"/>
</dbReference>
<dbReference type="STRING" id="39947.O04986"/>
<dbReference type="PaxDb" id="39947-O04986"/>
<dbReference type="EnsemblPlants" id="Os03t0233900-01">
    <property type="protein sequence ID" value="Os03t0233900-01"/>
    <property type="gene ID" value="Os03g0233900"/>
</dbReference>
<dbReference type="GeneID" id="4332166"/>
<dbReference type="Gramene" id="Os03t0233900-01">
    <property type="protein sequence ID" value="Os03t0233900-01"/>
    <property type="gene ID" value="Os03g0233900"/>
</dbReference>
<dbReference type="KEGG" id="dosa:Os03g0233900"/>
<dbReference type="eggNOG" id="KOG3378">
    <property type="taxonomic scope" value="Eukaryota"/>
</dbReference>
<dbReference type="HOGENOM" id="CLU_003827_11_2_1"/>
<dbReference type="InParanoid" id="O04986"/>
<dbReference type="OMA" id="ITSIMKQ"/>
<dbReference type="OrthoDB" id="436496at2759"/>
<dbReference type="BioCyc" id="MetaCyc:MONOMER-19374"/>
<dbReference type="EvolutionaryTrace" id="O04986"/>
<dbReference type="Proteomes" id="UP000000763">
    <property type="component" value="Chromosome 3"/>
</dbReference>
<dbReference type="Proteomes" id="UP000007752">
    <property type="component" value="Chromosome 3"/>
</dbReference>
<dbReference type="Proteomes" id="UP000059680">
    <property type="component" value="Chromosome 3"/>
</dbReference>
<dbReference type="GO" id="GO:0005737">
    <property type="term" value="C:cytoplasm"/>
    <property type="evidence" value="ECO:0000250"/>
    <property type="project" value="UniProtKB"/>
</dbReference>
<dbReference type="GO" id="GO:0005634">
    <property type="term" value="C:nucleus"/>
    <property type="evidence" value="ECO:0000250"/>
    <property type="project" value="UniProtKB"/>
</dbReference>
<dbReference type="GO" id="GO:0020037">
    <property type="term" value="F:heme binding"/>
    <property type="evidence" value="ECO:0007669"/>
    <property type="project" value="InterPro"/>
</dbReference>
<dbReference type="GO" id="GO:0046872">
    <property type="term" value="F:metal ion binding"/>
    <property type="evidence" value="ECO:0007669"/>
    <property type="project" value="UniProtKB-KW"/>
</dbReference>
<dbReference type="GO" id="GO:0016491">
    <property type="term" value="F:oxidoreductase activity"/>
    <property type="evidence" value="ECO:0007669"/>
    <property type="project" value="UniProtKB-KW"/>
</dbReference>
<dbReference type="GO" id="GO:0019825">
    <property type="term" value="F:oxygen binding"/>
    <property type="evidence" value="ECO:0007669"/>
    <property type="project" value="InterPro"/>
</dbReference>
<dbReference type="GO" id="GO:0010167">
    <property type="term" value="P:response to nitrate"/>
    <property type="evidence" value="ECO:0000270"/>
    <property type="project" value="UniProtKB"/>
</dbReference>
<dbReference type="GO" id="GO:0071731">
    <property type="term" value="P:response to nitric oxide"/>
    <property type="evidence" value="ECO:0000270"/>
    <property type="project" value="UniProtKB"/>
</dbReference>
<dbReference type="GO" id="GO:0080033">
    <property type="term" value="P:response to nitrite"/>
    <property type="evidence" value="ECO:0000270"/>
    <property type="project" value="UniProtKB"/>
</dbReference>
<dbReference type="CDD" id="cd14784">
    <property type="entry name" value="class1_nsHb-like"/>
    <property type="match status" value="1"/>
</dbReference>
<dbReference type="Gene3D" id="1.10.490.10">
    <property type="entry name" value="Globins"/>
    <property type="match status" value="1"/>
</dbReference>
<dbReference type="InterPro" id="IPR000971">
    <property type="entry name" value="Globin"/>
</dbReference>
<dbReference type="InterPro" id="IPR009050">
    <property type="entry name" value="Globin-like_sf"/>
</dbReference>
<dbReference type="InterPro" id="IPR012292">
    <property type="entry name" value="Globin/Proto"/>
</dbReference>
<dbReference type="InterPro" id="IPR001032">
    <property type="entry name" value="Leghaemoglobin-like"/>
</dbReference>
<dbReference type="InterPro" id="IPR019824">
    <property type="entry name" value="Leghaemoglobin_Fe_BS"/>
</dbReference>
<dbReference type="PANTHER" id="PTHR22924">
    <property type="entry name" value="LEGHEMOGLOBIN-RELATED"/>
    <property type="match status" value="1"/>
</dbReference>
<dbReference type="PANTHER" id="PTHR22924:SF98">
    <property type="entry name" value="NON-SYMBIOTIC HEMOGLOBIN 3"/>
    <property type="match status" value="1"/>
</dbReference>
<dbReference type="Pfam" id="PF00042">
    <property type="entry name" value="Globin"/>
    <property type="match status" value="1"/>
</dbReference>
<dbReference type="PRINTS" id="PR00188">
    <property type="entry name" value="PLANTGLOBIN"/>
</dbReference>
<dbReference type="SUPFAM" id="SSF46458">
    <property type="entry name" value="Globin-like"/>
    <property type="match status" value="1"/>
</dbReference>
<dbReference type="PROSITE" id="PS01033">
    <property type="entry name" value="GLOBIN"/>
    <property type="match status" value="1"/>
</dbReference>
<dbReference type="PROSITE" id="PS00208">
    <property type="entry name" value="PLANT_GLOBIN"/>
    <property type="match status" value="1"/>
</dbReference>
<comment type="function">
    <text evidence="9 12 14">Phytoglobin that reduces nitrite to nitric oxide under anoxic conditions (e.g. during flooding or in waterlogged soil) (PubMed:21495624). May not function as an oxygen storage or transport protein (PubMed:17540516, PubMed:9390447). Has an unusually high affinity for O(2) through a hexacoordinate heme iron because of a very low dissociation constant (PubMed:9390447).</text>
</comment>
<comment type="catalytic activity">
    <reaction evidence="9">
        <text>Fe(III)-heme b-[protein] + nitric oxide + H2O = Fe(II)-heme b-[protein] + nitrite + 2 H(+)</text>
        <dbReference type="Rhea" id="RHEA:77711"/>
        <dbReference type="Rhea" id="RHEA-COMP:18975"/>
        <dbReference type="Rhea" id="RHEA-COMP:18976"/>
        <dbReference type="ChEBI" id="CHEBI:15377"/>
        <dbReference type="ChEBI" id="CHEBI:15378"/>
        <dbReference type="ChEBI" id="CHEBI:16301"/>
        <dbReference type="ChEBI" id="CHEBI:16480"/>
        <dbReference type="ChEBI" id="CHEBI:55376"/>
        <dbReference type="ChEBI" id="CHEBI:60344"/>
    </reaction>
    <physiologicalReaction direction="right-to-left" evidence="9">
        <dbReference type="Rhea" id="RHEA:77713"/>
    </physiologicalReaction>
</comment>
<comment type="cofactor">
    <cofactor evidence="4 8">
        <name>heme b</name>
        <dbReference type="ChEBI" id="CHEBI:60344"/>
    </cofactor>
    <text evidence="4 8">Binds 1 heme group per subunit.</text>
</comment>
<comment type="activity regulation">
    <text evidence="11">Slowly reduced by ascorbic acid (AA); this reaction may become a source of nitric oxide (NO) during hypoxia.</text>
</comment>
<comment type="subunit">
    <text evidence="4 5 8">Homodimer.</text>
</comment>
<comment type="subcellular location">
    <subcellularLocation>
        <location evidence="1">Cytoplasm</location>
    </subcellularLocation>
    <subcellularLocation>
        <location evidence="1">Nucleus</location>
    </subcellularLocation>
</comment>
<comment type="tissue specificity">
    <text evidence="6 10 12">Expressed in coleoptiles, embryos, leaves, seminal roots and roots.</text>
</comment>
<comment type="induction">
    <text evidence="6 7">By flooding and etiolating but not by oxidative, nitrosative or hormonal stresses (PubMed:11448759). Strong, rapid and transient induction by nitrate NO(3)(-), nitrite NO(2)(-) and nitric oxide (NO) donors, such as S-nitroso-N-acetylpenicillamine (SNAP) and sodium nitroprusside (SNP) (PubMed:15695464).</text>
</comment>
<comment type="similarity">
    <text evidence="16">Belongs to the plant globin family.</text>
</comment>
<keyword id="KW-0002">3D-structure</keyword>
<keyword id="KW-0963">Cytoplasm</keyword>
<keyword id="KW-0349">Heme</keyword>
<keyword id="KW-0408">Iron</keyword>
<keyword id="KW-0479">Metal-binding</keyword>
<keyword id="KW-0539">Nucleus</keyword>
<keyword id="KW-0560">Oxidoreductase</keyword>
<keyword id="KW-1185">Reference proteome</keyword>
<organism>
    <name type="scientific">Oryza sativa subsp. japonica</name>
    <name type="common">Rice</name>
    <dbReference type="NCBI Taxonomy" id="39947"/>
    <lineage>
        <taxon>Eukaryota</taxon>
        <taxon>Viridiplantae</taxon>
        <taxon>Streptophyta</taxon>
        <taxon>Embryophyta</taxon>
        <taxon>Tracheophyta</taxon>
        <taxon>Spermatophyta</taxon>
        <taxon>Magnoliopsida</taxon>
        <taxon>Liliopsida</taxon>
        <taxon>Poales</taxon>
        <taxon>Poaceae</taxon>
        <taxon>BOP clade</taxon>
        <taxon>Oryzoideae</taxon>
        <taxon>Oryzeae</taxon>
        <taxon>Oryzinae</taxon>
        <taxon>Oryza</taxon>
        <taxon>Oryza sativa</taxon>
    </lineage>
</organism>